<sequence>MPIGGDVKADQETSGSRSIKRIGFGFIGGIGYDITPNITLDLGYRYNDWGRLENVRFKTHEASFGVRYRF</sequence>
<organism>
    <name type="scientific">Haemophilus influenzae (strain ATCC 51907 / DSM 11121 / KW20 / Rd)</name>
    <dbReference type="NCBI Taxonomy" id="71421"/>
    <lineage>
        <taxon>Bacteria</taxon>
        <taxon>Pseudomonadati</taxon>
        <taxon>Pseudomonadota</taxon>
        <taxon>Gammaproteobacteria</taxon>
        <taxon>Pasteurellales</taxon>
        <taxon>Pasteurellaceae</taxon>
        <taxon>Haemophilus</taxon>
    </lineage>
</organism>
<dbReference type="EMBL" id="L42023">
    <property type="protein sequence ID" value="AAC22081.1"/>
    <property type="molecule type" value="Genomic_DNA"/>
</dbReference>
<dbReference type="PIR" id="F64066">
    <property type="entry name" value="F64066"/>
</dbReference>
<dbReference type="RefSeq" id="NP_438576.1">
    <property type="nucleotide sequence ID" value="NC_000907.1"/>
</dbReference>
<dbReference type="SMR" id="Q57392"/>
<dbReference type="STRING" id="71421.HI_0414"/>
<dbReference type="EnsemblBacteria" id="AAC22081">
    <property type="protein sequence ID" value="AAC22081"/>
    <property type="gene ID" value="HI_0414"/>
</dbReference>
<dbReference type="KEGG" id="hin:HI_0414"/>
<dbReference type="PATRIC" id="fig|71421.8.peg.434"/>
<dbReference type="eggNOG" id="COG3637">
    <property type="taxonomic scope" value="Bacteria"/>
</dbReference>
<dbReference type="HOGENOM" id="CLU_203144_0_0_6"/>
<dbReference type="OrthoDB" id="6101900at2"/>
<dbReference type="BioCyc" id="HINF71421:G1GJ1-429-MONOMER"/>
<dbReference type="Proteomes" id="UP000000579">
    <property type="component" value="Chromosome"/>
</dbReference>
<dbReference type="GO" id="GO:0009279">
    <property type="term" value="C:cell outer membrane"/>
    <property type="evidence" value="ECO:0007669"/>
    <property type="project" value="UniProtKB-ARBA"/>
</dbReference>
<dbReference type="GO" id="GO:0015288">
    <property type="term" value="F:porin activity"/>
    <property type="evidence" value="ECO:0007669"/>
    <property type="project" value="InterPro"/>
</dbReference>
<dbReference type="Gene3D" id="2.40.160.20">
    <property type="match status" value="1"/>
</dbReference>
<dbReference type="InterPro" id="IPR011250">
    <property type="entry name" value="OMP/PagP_b-brl"/>
</dbReference>
<dbReference type="InterPro" id="IPR003394">
    <property type="entry name" value="Porin_opacity"/>
</dbReference>
<dbReference type="Pfam" id="PF02462">
    <property type="entry name" value="Opacity"/>
    <property type="match status" value="1"/>
</dbReference>
<dbReference type="SUPFAM" id="SSF56925">
    <property type="entry name" value="OMPA-like"/>
    <property type="match status" value="1"/>
</dbReference>
<accession>Q57392</accession>
<accession>O05021</accession>
<comment type="similarity">
    <text evidence="1">Belongs to the opacity porin family.</text>
</comment>
<gene>
    <name type="ordered locus">HI_0414</name>
</gene>
<feature type="chain" id="PRO_0000077920" description="Uncharacterized protein HI_0414">
    <location>
        <begin position="1"/>
        <end position="70"/>
    </location>
</feature>
<reference key="1">
    <citation type="journal article" date="1995" name="Science">
        <title>Whole-genome random sequencing and assembly of Haemophilus influenzae Rd.</title>
        <authorList>
            <person name="Fleischmann R.D."/>
            <person name="Adams M.D."/>
            <person name="White O."/>
            <person name="Clayton R.A."/>
            <person name="Kirkness E.F."/>
            <person name="Kerlavage A.R."/>
            <person name="Bult C.J."/>
            <person name="Tomb J.-F."/>
            <person name="Dougherty B.A."/>
            <person name="Merrick J.M."/>
            <person name="McKenney K."/>
            <person name="Sutton G.G."/>
            <person name="FitzHugh W."/>
            <person name="Fields C.A."/>
            <person name="Gocayne J.D."/>
            <person name="Scott J.D."/>
            <person name="Shirley R."/>
            <person name="Liu L.-I."/>
            <person name="Glodek A."/>
            <person name="Kelley J.M."/>
            <person name="Weidman J.F."/>
            <person name="Phillips C.A."/>
            <person name="Spriggs T."/>
            <person name="Hedblom E."/>
            <person name="Cotton M.D."/>
            <person name="Utterback T.R."/>
            <person name="Hanna M.C."/>
            <person name="Nguyen D.T."/>
            <person name="Saudek D.M."/>
            <person name="Brandon R.C."/>
            <person name="Fine L.D."/>
            <person name="Fritchman J.L."/>
            <person name="Fuhrmann J.L."/>
            <person name="Geoghagen N.S.M."/>
            <person name="Gnehm C.L."/>
            <person name="McDonald L.A."/>
            <person name="Small K.V."/>
            <person name="Fraser C.M."/>
            <person name="Smith H.O."/>
            <person name="Venter J.C."/>
        </authorList>
    </citation>
    <scope>NUCLEOTIDE SEQUENCE [LARGE SCALE GENOMIC DNA]</scope>
    <source>
        <strain>ATCC 51907 / DSM 11121 / KW20 / Rd</strain>
    </source>
</reference>
<protein>
    <recommendedName>
        <fullName>Uncharacterized protein HI_0414</fullName>
    </recommendedName>
</protein>
<keyword id="KW-1185">Reference proteome</keyword>
<proteinExistence type="inferred from homology"/>
<name>Y414_HAEIN</name>
<evidence type="ECO:0000305" key="1"/>